<proteinExistence type="inferred from homology"/>
<name>EFPL_XANE5</name>
<protein>
    <recommendedName>
        <fullName evidence="1">Elongation factor P-like protein</fullName>
    </recommendedName>
</protein>
<gene>
    <name type="ordered locus">XCV1895</name>
</gene>
<organism>
    <name type="scientific">Xanthomonas euvesicatoria pv. vesicatoria (strain 85-10)</name>
    <name type="common">Xanthomonas campestris pv. vesicatoria</name>
    <dbReference type="NCBI Taxonomy" id="316273"/>
    <lineage>
        <taxon>Bacteria</taxon>
        <taxon>Pseudomonadati</taxon>
        <taxon>Pseudomonadota</taxon>
        <taxon>Gammaproteobacteria</taxon>
        <taxon>Lysobacterales</taxon>
        <taxon>Lysobacteraceae</taxon>
        <taxon>Xanthomonas</taxon>
    </lineage>
</organism>
<evidence type="ECO:0000255" key="1">
    <source>
        <dbReference type="HAMAP-Rule" id="MF_00646"/>
    </source>
</evidence>
<feature type="chain" id="PRO_0000259904" description="Elongation factor P-like protein">
    <location>
        <begin position="1"/>
        <end position="188"/>
    </location>
</feature>
<accession>Q3BUD7</accession>
<reference key="1">
    <citation type="journal article" date="2005" name="J. Bacteriol.">
        <title>Insights into genome plasticity and pathogenicity of the plant pathogenic Bacterium Xanthomonas campestris pv. vesicatoria revealed by the complete genome sequence.</title>
        <authorList>
            <person name="Thieme F."/>
            <person name="Koebnik R."/>
            <person name="Bekel T."/>
            <person name="Berger C."/>
            <person name="Boch J."/>
            <person name="Buettner D."/>
            <person name="Caldana C."/>
            <person name="Gaigalat L."/>
            <person name="Goesmann A."/>
            <person name="Kay S."/>
            <person name="Kirchner O."/>
            <person name="Lanz C."/>
            <person name="Linke B."/>
            <person name="McHardy A.C."/>
            <person name="Meyer F."/>
            <person name="Mittenhuber G."/>
            <person name="Nies D.H."/>
            <person name="Niesbach-Kloesgen U."/>
            <person name="Patschkowski T."/>
            <person name="Rueckert C."/>
            <person name="Rupp O."/>
            <person name="Schneiker S."/>
            <person name="Schuster S.C."/>
            <person name="Vorhoelter F.J."/>
            <person name="Weber E."/>
            <person name="Puehler A."/>
            <person name="Bonas U."/>
            <person name="Bartels D."/>
            <person name="Kaiser O."/>
        </authorList>
    </citation>
    <scope>NUCLEOTIDE SEQUENCE [LARGE SCALE GENOMIC DNA]</scope>
    <source>
        <strain>85-10</strain>
    </source>
</reference>
<sequence>MKANDIKKGNVVEYNGGIYQIRDIERSSPQGRGGNVRFRFIMYSVPGGVKTDASFDADDNLPEVELLRRQSTFSYKDGEAFVFMDDEDFTPYTLDADVIGTDAGYITDGLTGIYVQVIDDQPVAVQLPQTVTLEVVETPPELKGGTATKRPKPAKLNTGMEIMVPEYITNGERVLVNTTTGEFAGRAD</sequence>
<dbReference type="EMBL" id="AM039952">
    <property type="protein sequence ID" value="CAJ23572.1"/>
    <property type="molecule type" value="Genomic_DNA"/>
</dbReference>
<dbReference type="SMR" id="Q3BUD7"/>
<dbReference type="STRING" id="456327.BJD11_12950"/>
<dbReference type="KEGG" id="xcv:XCV1895"/>
<dbReference type="eggNOG" id="COG0231">
    <property type="taxonomic scope" value="Bacteria"/>
</dbReference>
<dbReference type="HOGENOM" id="CLU_074944_2_0_6"/>
<dbReference type="Proteomes" id="UP000007069">
    <property type="component" value="Chromosome"/>
</dbReference>
<dbReference type="GO" id="GO:0005737">
    <property type="term" value="C:cytoplasm"/>
    <property type="evidence" value="ECO:0007669"/>
    <property type="project" value="InterPro"/>
</dbReference>
<dbReference type="GO" id="GO:0003746">
    <property type="term" value="F:translation elongation factor activity"/>
    <property type="evidence" value="ECO:0007669"/>
    <property type="project" value="UniProtKB-UniRule"/>
</dbReference>
<dbReference type="GO" id="GO:0043043">
    <property type="term" value="P:peptide biosynthetic process"/>
    <property type="evidence" value="ECO:0007669"/>
    <property type="project" value="InterPro"/>
</dbReference>
<dbReference type="CDD" id="cd04470">
    <property type="entry name" value="S1_EF-P_repeat_1"/>
    <property type="match status" value="1"/>
</dbReference>
<dbReference type="CDD" id="cd05794">
    <property type="entry name" value="S1_EF-P_repeat_2"/>
    <property type="match status" value="1"/>
</dbReference>
<dbReference type="FunFam" id="2.40.50.140:FF:000004">
    <property type="entry name" value="Elongation factor P"/>
    <property type="match status" value="1"/>
</dbReference>
<dbReference type="FunFam" id="2.30.30.30:FF:000036">
    <property type="entry name" value="Elongation factor P-like protein"/>
    <property type="match status" value="1"/>
</dbReference>
<dbReference type="FunFam" id="2.40.50.140:FF:000233">
    <property type="entry name" value="Elongation factor P-like protein"/>
    <property type="match status" value="1"/>
</dbReference>
<dbReference type="Gene3D" id="2.30.30.30">
    <property type="match status" value="1"/>
</dbReference>
<dbReference type="Gene3D" id="2.40.50.140">
    <property type="entry name" value="Nucleic acid-binding proteins"/>
    <property type="match status" value="2"/>
</dbReference>
<dbReference type="HAMAP" id="MF_00646">
    <property type="entry name" value="EFP"/>
    <property type="match status" value="1"/>
</dbReference>
<dbReference type="InterPro" id="IPR015365">
    <property type="entry name" value="Elong-fact-P_C"/>
</dbReference>
<dbReference type="InterPro" id="IPR012340">
    <property type="entry name" value="NA-bd_OB-fold"/>
</dbReference>
<dbReference type="InterPro" id="IPR014722">
    <property type="entry name" value="Rib_uL2_dom2"/>
</dbReference>
<dbReference type="InterPro" id="IPR020599">
    <property type="entry name" value="Transl_elong_fac_P/YeiP"/>
</dbReference>
<dbReference type="InterPro" id="IPR013185">
    <property type="entry name" value="Transl_elong_KOW-like"/>
</dbReference>
<dbReference type="InterPro" id="IPR011897">
    <property type="entry name" value="Transl_elong_p-like_YeiP"/>
</dbReference>
<dbReference type="InterPro" id="IPR001059">
    <property type="entry name" value="Transl_elong_P/YeiP_cen"/>
</dbReference>
<dbReference type="InterPro" id="IPR013852">
    <property type="entry name" value="Transl_elong_P/YeiP_CS"/>
</dbReference>
<dbReference type="InterPro" id="IPR008991">
    <property type="entry name" value="Translation_prot_SH3-like_sf"/>
</dbReference>
<dbReference type="NCBIfam" id="NF001810">
    <property type="entry name" value="PRK00529.1"/>
    <property type="match status" value="1"/>
</dbReference>
<dbReference type="NCBIfam" id="NF003392">
    <property type="entry name" value="PRK04542.1"/>
    <property type="match status" value="1"/>
</dbReference>
<dbReference type="NCBIfam" id="TIGR02178">
    <property type="entry name" value="yeiP"/>
    <property type="match status" value="1"/>
</dbReference>
<dbReference type="PANTHER" id="PTHR30053">
    <property type="entry name" value="ELONGATION FACTOR P"/>
    <property type="match status" value="1"/>
</dbReference>
<dbReference type="PANTHER" id="PTHR30053:SF14">
    <property type="entry name" value="TRANSLATION ELONGATION FACTOR KOW-LIKE DOMAIN-CONTAINING PROTEIN"/>
    <property type="match status" value="1"/>
</dbReference>
<dbReference type="Pfam" id="PF01132">
    <property type="entry name" value="EFP"/>
    <property type="match status" value="1"/>
</dbReference>
<dbReference type="Pfam" id="PF08207">
    <property type="entry name" value="EFP_N"/>
    <property type="match status" value="1"/>
</dbReference>
<dbReference type="Pfam" id="PF09285">
    <property type="entry name" value="Elong-fact-P_C"/>
    <property type="match status" value="1"/>
</dbReference>
<dbReference type="PIRSF" id="PIRSF005901">
    <property type="entry name" value="EF-P"/>
    <property type="match status" value="1"/>
</dbReference>
<dbReference type="SMART" id="SM01185">
    <property type="entry name" value="EFP"/>
    <property type="match status" value="1"/>
</dbReference>
<dbReference type="SMART" id="SM00841">
    <property type="entry name" value="Elong-fact-P_C"/>
    <property type="match status" value="1"/>
</dbReference>
<dbReference type="SUPFAM" id="SSF50249">
    <property type="entry name" value="Nucleic acid-binding proteins"/>
    <property type="match status" value="2"/>
</dbReference>
<dbReference type="SUPFAM" id="SSF50104">
    <property type="entry name" value="Translation proteins SH3-like domain"/>
    <property type="match status" value="1"/>
</dbReference>
<dbReference type="PROSITE" id="PS01275">
    <property type="entry name" value="EFP"/>
    <property type="match status" value="1"/>
</dbReference>
<comment type="similarity">
    <text evidence="1">Belongs to the elongation factor P family.</text>
</comment>